<name>SPX_LISIN</name>
<sequence length="131" mass="15582">MVTLYTSPSCTSCRKARAWLEEHDIPYKERNIFSEPLSLDEIKEILRMTEDGTDEIISTRSKTFQKLNVDLDSLPLQQLFELIQKNPGLLRRPIIIDEKRLQVGYNEDEIRRFLPRRVRTYQLREAQKMVN</sequence>
<protein>
    <recommendedName>
        <fullName evidence="1">Global transcriptional regulator Spx</fullName>
    </recommendedName>
</protein>
<dbReference type="EMBL" id="AL596171">
    <property type="protein sequence ID" value="CAC97523.1"/>
    <property type="molecule type" value="Genomic_DNA"/>
</dbReference>
<dbReference type="PIR" id="AC1719">
    <property type="entry name" value="AC1719"/>
</dbReference>
<dbReference type="SMR" id="P60377"/>
<dbReference type="STRING" id="272626.gene:17566657"/>
<dbReference type="KEGG" id="lin:lin2295"/>
<dbReference type="eggNOG" id="COG1393">
    <property type="taxonomic scope" value="Bacteria"/>
</dbReference>
<dbReference type="HOGENOM" id="CLU_116644_1_1_9"/>
<dbReference type="OrthoDB" id="9794155at2"/>
<dbReference type="Proteomes" id="UP000002513">
    <property type="component" value="Chromosome"/>
</dbReference>
<dbReference type="GO" id="GO:0005737">
    <property type="term" value="C:cytoplasm"/>
    <property type="evidence" value="ECO:0007669"/>
    <property type="project" value="UniProtKB-SubCell"/>
</dbReference>
<dbReference type="GO" id="GO:0045892">
    <property type="term" value="P:negative regulation of DNA-templated transcription"/>
    <property type="evidence" value="ECO:0007669"/>
    <property type="project" value="InterPro"/>
</dbReference>
<dbReference type="CDD" id="cd03032">
    <property type="entry name" value="ArsC_Spx"/>
    <property type="match status" value="1"/>
</dbReference>
<dbReference type="Gene3D" id="3.40.30.10">
    <property type="entry name" value="Glutaredoxin"/>
    <property type="match status" value="1"/>
</dbReference>
<dbReference type="HAMAP" id="MF_01132">
    <property type="entry name" value="Spx"/>
    <property type="match status" value="1"/>
</dbReference>
<dbReference type="InterPro" id="IPR006660">
    <property type="entry name" value="Arsenate_reductase-like"/>
</dbReference>
<dbReference type="InterPro" id="IPR023731">
    <property type="entry name" value="Spx"/>
</dbReference>
<dbReference type="InterPro" id="IPR036249">
    <property type="entry name" value="Thioredoxin-like_sf"/>
</dbReference>
<dbReference type="InterPro" id="IPR006504">
    <property type="entry name" value="Tscrpt_reg_Spx/MgsR"/>
</dbReference>
<dbReference type="NCBIfam" id="TIGR01617">
    <property type="entry name" value="arsC_related"/>
    <property type="match status" value="1"/>
</dbReference>
<dbReference type="NCBIfam" id="NF002459">
    <property type="entry name" value="PRK01655.1"/>
    <property type="match status" value="1"/>
</dbReference>
<dbReference type="NCBIfam" id="NF009210">
    <property type="entry name" value="PRK12559.1"/>
    <property type="match status" value="1"/>
</dbReference>
<dbReference type="PANTHER" id="PTHR30041">
    <property type="entry name" value="ARSENATE REDUCTASE"/>
    <property type="match status" value="1"/>
</dbReference>
<dbReference type="PANTHER" id="PTHR30041:SF7">
    <property type="entry name" value="GLOBAL TRANSCRIPTIONAL REGULATOR SPX"/>
    <property type="match status" value="1"/>
</dbReference>
<dbReference type="Pfam" id="PF03960">
    <property type="entry name" value="ArsC"/>
    <property type="match status" value="1"/>
</dbReference>
<dbReference type="SUPFAM" id="SSF52833">
    <property type="entry name" value="Thioredoxin-like"/>
    <property type="match status" value="1"/>
</dbReference>
<dbReference type="PROSITE" id="PS51353">
    <property type="entry name" value="ARSC"/>
    <property type="match status" value="1"/>
</dbReference>
<organism>
    <name type="scientific">Listeria innocua serovar 6a (strain ATCC BAA-680 / CLIP 11262)</name>
    <dbReference type="NCBI Taxonomy" id="272626"/>
    <lineage>
        <taxon>Bacteria</taxon>
        <taxon>Bacillati</taxon>
        <taxon>Bacillota</taxon>
        <taxon>Bacilli</taxon>
        <taxon>Bacillales</taxon>
        <taxon>Listeriaceae</taxon>
        <taxon>Listeria</taxon>
    </lineage>
</organism>
<gene>
    <name evidence="1" type="primary">spx</name>
    <name type="ordered locus">lin2295</name>
</gene>
<keyword id="KW-0963">Cytoplasm</keyword>
<keyword id="KW-1015">Disulfide bond</keyword>
<keyword id="KW-0676">Redox-active center</keyword>
<keyword id="KW-0804">Transcription</keyword>
<keyword id="KW-0805">Transcription regulation</keyword>
<accession>P60377</accession>
<accession>Q929I0</accession>
<reference key="1">
    <citation type="journal article" date="2001" name="Science">
        <title>Comparative genomics of Listeria species.</title>
        <authorList>
            <person name="Glaser P."/>
            <person name="Frangeul L."/>
            <person name="Buchrieser C."/>
            <person name="Rusniok C."/>
            <person name="Amend A."/>
            <person name="Baquero F."/>
            <person name="Berche P."/>
            <person name="Bloecker H."/>
            <person name="Brandt P."/>
            <person name="Chakraborty T."/>
            <person name="Charbit A."/>
            <person name="Chetouani F."/>
            <person name="Couve E."/>
            <person name="de Daruvar A."/>
            <person name="Dehoux P."/>
            <person name="Domann E."/>
            <person name="Dominguez-Bernal G."/>
            <person name="Duchaud E."/>
            <person name="Durant L."/>
            <person name="Dussurget O."/>
            <person name="Entian K.-D."/>
            <person name="Fsihi H."/>
            <person name="Garcia-del Portillo F."/>
            <person name="Garrido P."/>
            <person name="Gautier L."/>
            <person name="Goebel W."/>
            <person name="Gomez-Lopez N."/>
            <person name="Hain T."/>
            <person name="Hauf J."/>
            <person name="Jackson D."/>
            <person name="Jones L.-M."/>
            <person name="Kaerst U."/>
            <person name="Kreft J."/>
            <person name="Kuhn M."/>
            <person name="Kunst F."/>
            <person name="Kurapkat G."/>
            <person name="Madueno E."/>
            <person name="Maitournam A."/>
            <person name="Mata Vicente J."/>
            <person name="Ng E."/>
            <person name="Nedjari H."/>
            <person name="Nordsiek G."/>
            <person name="Novella S."/>
            <person name="de Pablos B."/>
            <person name="Perez-Diaz J.-C."/>
            <person name="Purcell R."/>
            <person name="Remmel B."/>
            <person name="Rose M."/>
            <person name="Schlueter T."/>
            <person name="Simoes N."/>
            <person name="Tierrez A."/>
            <person name="Vazquez-Boland J.-A."/>
            <person name="Voss H."/>
            <person name="Wehland J."/>
            <person name="Cossart P."/>
        </authorList>
    </citation>
    <scope>NUCLEOTIDE SEQUENCE [LARGE SCALE GENOMIC DNA]</scope>
    <source>
        <strain>ATCC BAA-680 / CLIP 11262</strain>
    </source>
</reference>
<comment type="function">
    <text evidence="1">Global transcriptional regulator that plays a key role in stress response and exerts either positive or negative regulation of genes. Acts by interacting with the C-terminal domain of the alpha subunit of the RNA polymerase (RNAP). This interaction can enhance binding of RNAP to the promoter region of target genes and stimulate their transcription, or block interaction of RNAP with activator.</text>
</comment>
<comment type="subunit">
    <text evidence="1">Interacts with the C-terminal domain of the alpha subunit of the RNAP.</text>
</comment>
<comment type="subcellular location">
    <subcellularLocation>
        <location evidence="1">Cytoplasm</location>
    </subcellularLocation>
</comment>
<comment type="similarity">
    <text evidence="1">Belongs to the ArsC family. Spx subfamily.</text>
</comment>
<proteinExistence type="inferred from homology"/>
<feature type="chain" id="PRO_0000162557" description="Global transcriptional regulator Spx">
    <location>
        <begin position="1"/>
        <end position="131"/>
    </location>
</feature>
<feature type="disulfide bond" description="Redox-active" evidence="1">
    <location>
        <begin position="10"/>
        <end position="13"/>
    </location>
</feature>
<evidence type="ECO:0000255" key="1">
    <source>
        <dbReference type="HAMAP-Rule" id="MF_01132"/>
    </source>
</evidence>